<dbReference type="EMBL" id="D89169">
    <property type="protein sequence ID" value="BAA13831.1"/>
    <property type="status" value="ALT_FRAME"/>
    <property type="molecule type" value="mRNA"/>
</dbReference>
<dbReference type="EMBL" id="CU329671">
    <property type="protein sequence ID" value="CAC01524.1"/>
    <property type="molecule type" value="Genomic_DNA"/>
</dbReference>
<dbReference type="PIR" id="T42532">
    <property type="entry name" value="T42532"/>
</dbReference>
<dbReference type="RefSeq" id="NP_595110.1">
    <property type="nucleotide sequence ID" value="NM_001021017.2"/>
</dbReference>
<dbReference type="SMR" id="Q9HGL3"/>
<dbReference type="BioGRID" id="277347">
    <property type="interactions" value="183"/>
</dbReference>
<dbReference type="FunCoup" id="Q9HGL3">
    <property type="interactions" value="268"/>
</dbReference>
<dbReference type="IntAct" id="Q9HGL3">
    <property type="interactions" value="2"/>
</dbReference>
<dbReference type="MINT" id="Q9HGL3"/>
<dbReference type="STRING" id="284812.Q9HGL3"/>
<dbReference type="iPTMnet" id="Q9HGL3"/>
<dbReference type="PaxDb" id="4896-SPBC800.09.1"/>
<dbReference type="EnsemblFungi" id="SPBC800.09.1">
    <property type="protein sequence ID" value="SPBC800.09.1:pep"/>
    <property type="gene ID" value="SPBC800.09"/>
</dbReference>
<dbReference type="GeneID" id="2540829"/>
<dbReference type="KEGG" id="spo:2540829"/>
<dbReference type="PomBase" id="SPBC800.09">
    <property type="gene designation" value="sum2"/>
</dbReference>
<dbReference type="VEuPathDB" id="FungiDB:SPBC800.09"/>
<dbReference type="eggNOG" id="KOG1073">
    <property type="taxonomic scope" value="Eukaryota"/>
</dbReference>
<dbReference type="HOGENOM" id="CLU_019221_4_1_1"/>
<dbReference type="InParanoid" id="Q9HGL3"/>
<dbReference type="OMA" id="PPKEEIY"/>
<dbReference type="PRO" id="PR:Q9HGL3"/>
<dbReference type="Proteomes" id="UP000002485">
    <property type="component" value="Chromosome II"/>
</dbReference>
<dbReference type="GO" id="GO:0005737">
    <property type="term" value="C:cytoplasm"/>
    <property type="evidence" value="ECO:0007005"/>
    <property type="project" value="PomBase"/>
</dbReference>
<dbReference type="GO" id="GO:0000932">
    <property type="term" value="C:P-body"/>
    <property type="evidence" value="ECO:0000318"/>
    <property type="project" value="GO_Central"/>
</dbReference>
<dbReference type="GO" id="GO:0003729">
    <property type="term" value="F:mRNA binding"/>
    <property type="evidence" value="ECO:0000318"/>
    <property type="project" value="GO_Central"/>
</dbReference>
<dbReference type="GO" id="GO:0170008">
    <property type="term" value="F:mRNA phosphatase activator activity"/>
    <property type="evidence" value="ECO:0000269"/>
    <property type="project" value="PomBase"/>
</dbReference>
<dbReference type="GO" id="GO:0030371">
    <property type="term" value="F:translation repressor activity"/>
    <property type="evidence" value="ECO:0000266"/>
    <property type="project" value="PomBase"/>
</dbReference>
<dbReference type="GO" id="GO:1904689">
    <property type="term" value="P:negative regulation of cytoplasmic translational initiation"/>
    <property type="evidence" value="ECO:0000266"/>
    <property type="project" value="PomBase"/>
</dbReference>
<dbReference type="GO" id="GO:0033962">
    <property type="term" value="P:P-body assembly"/>
    <property type="evidence" value="ECO:0000318"/>
    <property type="project" value="GO_Central"/>
</dbReference>
<dbReference type="GO" id="GO:0034063">
    <property type="term" value="P:stress granule assembly"/>
    <property type="evidence" value="ECO:0000318"/>
    <property type="project" value="GO_Central"/>
</dbReference>
<dbReference type="CDD" id="cd01736">
    <property type="entry name" value="LSm14_N"/>
    <property type="match status" value="1"/>
</dbReference>
<dbReference type="Gene3D" id="2.30.30.100">
    <property type="match status" value="1"/>
</dbReference>
<dbReference type="InterPro" id="IPR025762">
    <property type="entry name" value="DFDF"/>
</dbReference>
<dbReference type="InterPro" id="IPR019050">
    <property type="entry name" value="FDF_dom"/>
</dbReference>
<dbReference type="InterPro" id="IPR025761">
    <property type="entry name" value="FFD_box"/>
</dbReference>
<dbReference type="InterPro" id="IPR025609">
    <property type="entry name" value="Lsm14-like_N"/>
</dbReference>
<dbReference type="InterPro" id="IPR010920">
    <property type="entry name" value="LSM_dom_sf"/>
</dbReference>
<dbReference type="InterPro" id="IPR047575">
    <property type="entry name" value="Sm"/>
</dbReference>
<dbReference type="InterPro" id="IPR025768">
    <property type="entry name" value="TFG_box"/>
</dbReference>
<dbReference type="PANTHER" id="PTHR13586">
    <property type="entry name" value="SCD6 PROTEIN-RELATED"/>
    <property type="match status" value="1"/>
</dbReference>
<dbReference type="PANTHER" id="PTHR13586:SF0">
    <property type="entry name" value="TRAILER HITCH, ISOFORM H"/>
    <property type="match status" value="1"/>
</dbReference>
<dbReference type="Pfam" id="PF12701">
    <property type="entry name" value="LSM14"/>
    <property type="match status" value="1"/>
</dbReference>
<dbReference type="SMART" id="SM01199">
    <property type="entry name" value="FDF"/>
    <property type="match status" value="1"/>
</dbReference>
<dbReference type="SMART" id="SM01271">
    <property type="entry name" value="LSM14"/>
    <property type="match status" value="1"/>
</dbReference>
<dbReference type="SUPFAM" id="SSF50182">
    <property type="entry name" value="Sm-like ribonucleoproteins"/>
    <property type="match status" value="1"/>
</dbReference>
<dbReference type="PROSITE" id="PS51512">
    <property type="entry name" value="DFDF"/>
    <property type="match status" value="1"/>
</dbReference>
<dbReference type="PROSITE" id="PS51513">
    <property type="entry name" value="FFD"/>
    <property type="match status" value="1"/>
</dbReference>
<dbReference type="PROSITE" id="PS52002">
    <property type="entry name" value="SM"/>
    <property type="match status" value="1"/>
</dbReference>
<dbReference type="PROSITE" id="PS51536">
    <property type="entry name" value="TFG"/>
    <property type="match status" value="1"/>
</dbReference>
<keyword id="KW-0131">Cell cycle</keyword>
<keyword id="KW-1185">Reference proteome</keyword>
<protein>
    <recommendedName>
        <fullName>Protein sum2</fullName>
    </recommendedName>
</protein>
<name>SUM2_SCHPO</name>
<gene>
    <name type="primary">sum2</name>
    <name type="ORF">SPBC800.09</name>
</gene>
<evidence type="ECO:0000255" key="1">
    <source>
        <dbReference type="PROSITE-ProRule" id="PRU00845"/>
    </source>
</evidence>
<evidence type="ECO:0000255" key="2">
    <source>
        <dbReference type="PROSITE-ProRule" id="PRU01346"/>
    </source>
</evidence>
<evidence type="ECO:0000256" key="3">
    <source>
        <dbReference type="SAM" id="MobiDB-lite"/>
    </source>
</evidence>
<evidence type="ECO:0000305" key="4"/>
<proteinExistence type="evidence at protein level"/>
<comment type="function">
    <text>Required for G2/M phase checkpoint control.</text>
</comment>
<comment type="interaction">
    <interactant intactId="EBI-1117052">
        <id>Q9HGL3</id>
    </interactant>
    <interactant intactId="EBI-3647323">
        <id>O13828</id>
        <label>dcp2</label>
    </interactant>
    <organismsDiffer>false</organismsDiffer>
    <experiments>4</experiments>
</comment>
<comment type="sequence caution" evidence="4">
    <conflict type="frameshift">
        <sequence resource="EMBL-CDS" id="BAA13831"/>
    </conflict>
</comment>
<accession>Q9HGL3</accession>
<accession>P78821</accession>
<feature type="chain" id="PRO_0000072312" description="Protein sum2">
    <location>
        <begin position="1"/>
        <end position="426"/>
    </location>
</feature>
<feature type="domain" description="Sm" evidence="2">
    <location>
        <begin position="1"/>
        <end position="80"/>
    </location>
</feature>
<feature type="domain" description="DFDF" evidence="1">
    <location>
        <begin position="296"/>
        <end position="332"/>
    </location>
</feature>
<feature type="region of interest" description="Disordered" evidence="3">
    <location>
        <begin position="79"/>
        <end position="100"/>
    </location>
</feature>
<feature type="region of interest" description="Disordered" evidence="3">
    <location>
        <begin position="204"/>
        <end position="305"/>
    </location>
</feature>
<feature type="region of interest" description="Disordered" evidence="3">
    <location>
        <begin position="348"/>
        <end position="426"/>
    </location>
</feature>
<feature type="short sequence motif" description="FFD box">
    <location>
        <begin position="335"/>
        <end position="351"/>
    </location>
</feature>
<feature type="short sequence motif" description="TFG box">
    <location>
        <begin position="360"/>
        <end position="380"/>
    </location>
</feature>
<feature type="compositionally biased region" description="Pro residues" evidence="3">
    <location>
        <begin position="84"/>
        <end position="93"/>
    </location>
</feature>
<feature type="compositionally biased region" description="Polar residues" evidence="3">
    <location>
        <begin position="226"/>
        <end position="237"/>
    </location>
</feature>
<feature type="compositionally biased region" description="Low complexity" evidence="3">
    <location>
        <begin position="261"/>
        <end position="278"/>
    </location>
</feature>
<feature type="compositionally biased region" description="Polar residues" evidence="3">
    <location>
        <begin position="279"/>
        <end position="298"/>
    </location>
</feature>
<feature type="compositionally biased region" description="Basic and acidic residues" evidence="3">
    <location>
        <begin position="350"/>
        <end position="371"/>
    </location>
</feature>
<feature type="compositionally biased region" description="Basic residues" evidence="3">
    <location>
        <begin position="384"/>
        <end position="401"/>
    </location>
</feature>
<feature type="compositionally biased region" description="Polar residues" evidence="3">
    <location>
        <begin position="405"/>
        <end position="426"/>
    </location>
</feature>
<feature type="sequence conflict" description="In Ref. 1; BAA13831." evidence="4" ref="1">
    <original>A</original>
    <variation>V</variation>
    <location>
        <position position="34"/>
    </location>
</feature>
<feature type="sequence conflict" description="In Ref. 1; BAA13831." evidence="4" ref="1">
    <original>F</original>
    <variation>L</variation>
    <location>
        <position position="308"/>
    </location>
</feature>
<feature type="sequence conflict" description="In Ref. 1; BAA13831." evidence="4" ref="1">
    <original>Y</original>
    <variation>H</variation>
    <location>
        <position position="337"/>
    </location>
</feature>
<sequence>MTEFIGSRISLISKSDIRYVGILQDINSQDSTLALKHVRWCGTEGRKQDPSQEIPPSDNVFDYIVFRGSDVKDLRIEEPATTPSAPPVQPPNDPAIIGSNSGQYNWNQAQTAQPPQPVQPNPYGAPYQQAPPAGAPYYMYPNAPAQFVPPGGLPLGTPLDASTPAVPYYGAPDQQQMGQRPEFAQNVSQGFAGQAPYNVRPGYGMPSNQKPPNFAPGMPAPGPTAVSASPSLQSMPPTNGVIPGAQPSIEASIEKESTSIRNSTVTNDRVVNTTVDVSQSQTVETSGPSKEVPTTQPDASAAKPRTEFDFQTANQKFQSMKDDLLKGKNDEEAEEFYKPKQSFFDNISCESKEKGMEAADRRALRDRERSLNMETFGVAGSGNRGRRGRGRGRGGRGRGRGYARNQYNQYRNSNGSQPRAQPANDQ</sequence>
<reference key="1">
    <citation type="journal article" date="1997" name="DNA Res.">
        <title>Identification of open reading frames in Schizosaccharomyces pombe cDNAs.</title>
        <authorList>
            <person name="Yoshioka S."/>
            <person name="Kato K."/>
            <person name="Nakai K."/>
            <person name="Okayama H."/>
            <person name="Nojima H."/>
        </authorList>
    </citation>
    <scope>NUCLEOTIDE SEQUENCE [LARGE SCALE MRNA]</scope>
    <source>
        <strain>PR745</strain>
    </source>
</reference>
<reference key="2">
    <citation type="journal article" date="2002" name="Nature">
        <title>The genome sequence of Schizosaccharomyces pombe.</title>
        <authorList>
            <person name="Wood V."/>
            <person name="Gwilliam R."/>
            <person name="Rajandream M.A."/>
            <person name="Lyne M.H."/>
            <person name="Lyne R."/>
            <person name="Stewart A."/>
            <person name="Sgouros J.G."/>
            <person name="Peat N."/>
            <person name="Hayles J."/>
            <person name="Baker S.G."/>
            <person name="Basham D."/>
            <person name="Bowman S."/>
            <person name="Brooks K."/>
            <person name="Brown D."/>
            <person name="Brown S."/>
            <person name="Chillingworth T."/>
            <person name="Churcher C.M."/>
            <person name="Collins M."/>
            <person name="Connor R."/>
            <person name="Cronin A."/>
            <person name="Davis P."/>
            <person name="Feltwell T."/>
            <person name="Fraser A."/>
            <person name="Gentles S."/>
            <person name="Goble A."/>
            <person name="Hamlin N."/>
            <person name="Harris D.E."/>
            <person name="Hidalgo J."/>
            <person name="Hodgson G."/>
            <person name="Holroyd S."/>
            <person name="Hornsby T."/>
            <person name="Howarth S."/>
            <person name="Huckle E.J."/>
            <person name="Hunt S."/>
            <person name="Jagels K."/>
            <person name="James K.D."/>
            <person name="Jones L."/>
            <person name="Jones M."/>
            <person name="Leather S."/>
            <person name="McDonald S."/>
            <person name="McLean J."/>
            <person name="Mooney P."/>
            <person name="Moule S."/>
            <person name="Mungall K.L."/>
            <person name="Murphy L.D."/>
            <person name="Niblett D."/>
            <person name="Odell C."/>
            <person name="Oliver K."/>
            <person name="O'Neil S."/>
            <person name="Pearson D."/>
            <person name="Quail M.A."/>
            <person name="Rabbinowitsch E."/>
            <person name="Rutherford K.M."/>
            <person name="Rutter S."/>
            <person name="Saunders D."/>
            <person name="Seeger K."/>
            <person name="Sharp S."/>
            <person name="Skelton J."/>
            <person name="Simmonds M.N."/>
            <person name="Squares R."/>
            <person name="Squares S."/>
            <person name="Stevens K."/>
            <person name="Taylor K."/>
            <person name="Taylor R.G."/>
            <person name="Tivey A."/>
            <person name="Walsh S.V."/>
            <person name="Warren T."/>
            <person name="Whitehead S."/>
            <person name="Woodward J.R."/>
            <person name="Volckaert G."/>
            <person name="Aert R."/>
            <person name="Robben J."/>
            <person name="Grymonprez B."/>
            <person name="Weltjens I."/>
            <person name="Vanstreels E."/>
            <person name="Rieger M."/>
            <person name="Schaefer M."/>
            <person name="Mueller-Auer S."/>
            <person name="Gabel C."/>
            <person name="Fuchs M."/>
            <person name="Duesterhoeft A."/>
            <person name="Fritzc C."/>
            <person name="Holzer E."/>
            <person name="Moestl D."/>
            <person name="Hilbert H."/>
            <person name="Borzym K."/>
            <person name="Langer I."/>
            <person name="Beck A."/>
            <person name="Lehrach H."/>
            <person name="Reinhardt R."/>
            <person name="Pohl T.M."/>
            <person name="Eger P."/>
            <person name="Zimmermann W."/>
            <person name="Wedler H."/>
            <person name="Wambutt R."/>
            <person name="Purnelle B."/>
            <person name="Goffeau A."/>
            <person name="Cadieu E."/>
            <person name="Dreano S."/>
            <person name="Gloux S."/>
            <person name="Lelaure V."/>
            <person name="Mottier S."/>
            <person name="Galibert F."/>
            <person name="Aves S.J."/>
            <person name="Xiang Z."/>
            <person name="Hunt C."/>
            <person name="Moore K."/>
            <person name="Hurst S.M."/>
            <person name="Lucas M."/>
            <person name="Rochet M."/>
            <person name="Gaillardin C."/>
            <person name="Tallada V.A."/>
            <person name="Garzon A."/>
            <person name="Thode G."/>
            <person name="Daga R.R."/>
            <person name="Cruzado L."/>
            <person name="Jimenez J."/>
            <person name="Sanchez M."/>
            <person name="del Rey F."/>
            <person name="Benito J."/>
            <person name="Dominguez A."/>
            <person name="Revuelta J.L."/>
            <person name="Moreno S."/>
            <person name="Armstrong J."/>
            <person name="Forsburg S.L."/>
            <person name="Cerutti L."/>
            <person name="Lowe T."/>
            <person name="McCombie W.R."/>
            <person name="Paulsen I."/>
            <person name="Potashkin J."/>
            <person name="Shpakovski G.V."/>
            <person name="Ussery D."/>
            <person name="Barrell B.G."/>
            <person name="Nurse P."/>
        </authorList>
    </citation>
    <scope>NUCLEOTIDE SEQUENCE [LARGE SCALE GENOMIC DNA]</scope>
    <source>
        <strain>972 / ATCC 24843</strain>
    </source>
</reference>
<organism>
    <name type="scientific">Schizosaccharomyces pombe (strain 972 / ATCC 24843)</name>
    <name type="common">Fission yeast</name>
    <dbReference type="NCBI Taxonomy" id="284812"/>
    <lineage>
        <taxon>Eukaryota</taxon>
        <taxon>Fungi</taxon>
        <taxon>Dikarya</taxon>
        <taxon>Ascomycota</taxon>
        <taxon>Taphrinomycotina</taxon>
        <taxon>Schizosaccharomycetes</taxon>
        <taxon>Schizosaccharomycetales</taxon>
        <taxon>Schizosaccharomycetaceae</taxon>
        <taxon>Schizosaccharomyces</taxon>
    </lineage>
</organism>